<organism>
    <name type="scientific">Vanderwaltozyma polyspora (strain ATCC 22028 / DSM 70294 / BCRC 21397 / CBS 2163 / NBRC 10782 / NRRL Y-8283 / UCD 57-17)</name>
    <name type="common">Kluyveromyces polysporus</name>
    <dbReference type="NCBI Taxonomy" id="436907"/>
    <lineage>
        <taxon>Eukaryota</taxon>
        <taxon>Fungi</taxon>
        <taxon>Dikarya</taxon>
        <taxon>Ascomycota</taxon>
        <taxon>Saccharomycotina</taxon>
        <taxon>Saccharomycetes</taxon>
        <taxon>Saccharomycetales</taxon>
        <taxon>Saccharomycetaceae</taxon>
        <taxon>Vanderwaltozyma</taxon>
    </lineage>
</organism>
<reference key="1">
    <citation type="journal article" date="2007" name="Proc. Natl. Acad. Sci. U.S.A.">
        <title>Independent sorting-out of thousands of duplicated gene pairs in two yeast species descended from a whole-genome duplication.</title>
        <authorList>
            <person name="Scannell D.R."/>
            <person name="Frank A.C."/>
            <person name="Conant G.C."/>
            <person name="Byrne K.P."/>
            <person name="Woolfit M."/>
            <person name="Wolfe K.H."/>
        </authorList>
    </citation>
    <scope>NUCLEOTIDE SEQUENCE [LARGE SCALE GENOMIC DNA]</scope>
    <source>
        <strain>ATCC 22028 / DSM 70294 / BCRC 21397 / CBS 2163 / NBRC 10782 / NRRL Y-8283 / UCD 57-17</strain>
    </source>
</reference>
<keyword id="KW-0489">Methyltransferase</keyword>
<keyword id="KW-0539">Nucleus</keyword>
<keyword id="KW-1185">Reference proteome</keyword>
<keyword id="KW-0694">RNA-binding</keyword>
<keyword id="KW-0949">S-adenosyl-L-methionine</keyword>
<keyword id="KW-0808">Transferase</keyword>
<keyword id="KW-0819">tRNA processing</keyword>
<keyword id="KW-0820">tRNA-binding</keyword>
<evidence type="ECO:0000255" key="1">
    <source>
        <dbReference type="HAMAP-Rule" id="MF_03055"/>
    </source>
</evidence>
<accession>A7TT36</accession>
<protein>
    <recommendedName>
        <fullName evidence="1">tRNA (guanine-N(7)-)-methyltransferase</fullName>
        <ecNumber evidence="1">2.1.1.33</ecNumber>
    </recommendedName>
    <alternativeName>
        <fullName evidence="1">Transfer RNA methyltransferase 8</fullName>
    </alternativeName>
    <alternativeName>
        <fullName evidence="1">tRNA (guanine(46)-N(7))-methyltransferase</fullName>
    </alternativeName>
    <alternativeName>
        <fullName evidence="1">tRNA(m7G46)-methyltransferase</fullName>
    </alternativeName>
</protein>
<dbReference type="EC" id="2.1.1.33" evidence="1"/>
<dbReference type="EMBL" id="DS480540">
    <property type="protein sequence ID" value="EDO14572.1"/>
    <property type="molecule type" value="Genomic_DNA"/>
</dbReference>
<dbReference type="RefSeq" id="XP_001642430.1">
    <property type="nucleotide sequence ID" value="XM_001642380.1"/>
</dbReference>
<dbReference type="SMR" id="A7TT36"/>
<dbReference type="FunCoup" id="A7TT36">
    <property type="interactions" value="562"/>
</dbReference>
<dbReference type="STRING" id="436907.A7TT36"/>
<dbReference type="GeneID" id="5542586"/>
<dbReference type="KEGG" id="vpo:Kpol_269p6"/>
<dbReference type="eggNOG" id="KOG3115">
    <property type="taxonomic scope" value="Eukaryota"/>
</dbReference>
<dbReference type="HOGENOM" id="CLU_050910_3_1_1"/>
<dbReference type="InParanoid" id="A7TT36"/>
<dbReference type="OMA" id="LPNYFAK"/>
<dbReference type="OrthoDB" id="47276at2759"/>
<dbReference type="PhylomeDB" id="A7TT36"/>
<dbReference type="UniPathway" id="UPA00989"/>
<dbReference type="Proteomes" id="UP000000267">
    <property type="component" value="Unassembled WGS sequence"/>
</dbReference>
<dbReference type="GO" id="GO:0005634">
    <property type="term" value="C:nucleus"/>
    <property type="evidence" value="ECO:0007669"/>
    <property type="project" value="UniProtKB-SubCell"/>
</dbReference>
<dbReference type="GO" id="GO:0106143">
    <property type="term" value="C:tRNA (m7G46) methyltransferase complex"/>
    <property type="evidence" value="ECO:0007669"/>
    <property type="project" value="EnsemblFungi"/>
</dbReference>
<dbReference type="GO" id="GO:0008176">
    <property type="term" value="F:tRNA (guanine(46)-N7)-methyltransferase activity"/>
    <property type="evidence" value="ECO:0007669"/>
    <property type="project" value="UniProtKB-UniRule"/>
</dbReference>
<dbReference type="GO" id="GO:0000049">
    <property type="term" value="F:tRNA binding"/>
    <property type="evidence" value="ECO:0007669"/>
    <property type="project" value="UniProtKB-UniRule"/>
</dbReference>
<dbReference type="CDD" id="cd02440">
    <property type="entry name" value="AdoMet_MTases"/>
    <property type="match status" value="1"/>
</dbReference>
<dbReference type="FunFam" id="3.40.50.150:FF:000060">
    <property type="entry name" value="tRNA (guanine-N(7)-)-methyltransferase"/>
    <property type="match status" value="1"/>
</dbReference>
<dbReference type="Gene3D" id="3.40.50.150">
    <property type="entry name" value="Vaccinia Virus protein VP39"/>
    <property type="match status" value="1"/>
</dbReference>
<dbReference type="HAMAP" id="MF_03055">
    <property type="entry name" value="tRNA_methyltr_TrmB_euk"/>
    <property type="match status" value="1"/>
</dbReference>
<dbReference type="InterPro" id="IPR029063">
    <property type="entry name" value="SAM-dependent_MTases_sf"/>
</dbReference>
<dbReference type="InterPro" id="IPR025763">
    <property type="entry name" value="Trm8_euk"/>
</dbReference>
<dbReference type="InterPro" id="IPR003358">
    <property type="entry name" value="tRNA_(Gua-N-7)_MeTrfase_Trmb"/>
</dbReference>
<dbReference type="NCBIfam" id="TIGR00091">
    <property type="entry name" value="tRNA (guanosine(46)-N7)-methyltransferase TrmB"/>
    <property type="match status" value="1"/>
</dbReference>
<dbReference type="PANTHER" id="PTHR23417">
    <property type="entry name" value="3-DEOXY-D-MANNO-OCTULOSONIC-ACID TRANSFERASE/TRNA GUANINE-N 7 - -METHYLTRANSFERASE"/>
    <property type="match status" value="1"/>
</dbReference>
<dbReference type="PANTHER" id="PTHR23417:SF16">
    <property type="entry name" value="TRNA (GUANINE-N(7)-)-METHYLTRANSFERASE"/>
    <property type="match status" value="1"/>
</dbReference>
<dbReference type="Pfam" id="PF02390">
    <property type="entry name" value="Methyltransf_4"/>
    <property type="match status" value="1"/>
</dbReference>
<dbReference type="SUPFAM" id="SSF53335">
    <property type="entry name" value="S-adenosyl-L-methionine-dependent methyltransferases"/>
    <property type="match status" value="1"/>
</dbReference>
<dbReference type="PROSITE" id="PS51625">
    <property type="entry name" value="SAM_MT_TRMB"/>
    <property type="match status" value="1"/>
</dbReference>
<gene>
    <name evidence="1" type="primary">TRM8</name>
    <name type="ORF">Kpol_269p6</name>
</gene>
<comment type="function">
    <text evidence="1">Catalyzes the formation of N(7)-methylguanine at position 46 (m7G46) in tRNA.</text>
</comment>
<comment type="catalytic activity">
    <reaction evidence="1">
        <text>guanosine(46) in tRNA + S-adenosyl-L-methionine = N(7)-methylguanosine(46) in tRNA + S-adenosyl-L-homocysteine</text>
        <dbReference type="Rhea" id="RHEA:42708"/>
        <dbReference type="Rhea" id="RHEA-COMP:10188"/>
        <dbReference type="Rhea" id="RHEA-COMP:10189"/>
        <dbReference type="ChEBI" id="CHEBI:57856"/>
        <dbReference type="ChEBI" id="CHEBI:59789"/>
        <dbReference type="ChEBI" id="CHEBI:74269"/>
        <dbReference type="ChEBI" id="CHEBI:74480"/>
        <dbReference type="EC" id="2.1.1.33"/>
    </reaction>
</comment>
<comment type="pathway">
    <text evidence="1">tRNA modification; N(7)-methylguanine-tRNA biosynthesis.</text>
</comment>
<comment type="subunit">
    <text evidence="1">Forms a complex with TRM82.</text>
</comment>
<comment type="subcellular location">
    <subcellularLocation>
        <location evidence="1">Nucleus</location>
    </subcellularLocation>
</comment>
<comment type="similarity">
    <text evidence="1">Belongs to the class I-like SAM-binding methyltransferase superfamily. TrmB family.</text>
</comment>
<feature type="chain" id="PRO_0000370605" description="tRNA (guanine-N(7)-)-methyltransferase">
    <location>
        <begin position="1"/>
        <end position="286"/>
    </location>
</feature>
<feature type="active site" evidence="1">
    <location>
        <position position="184"/>
    </location>
</feature>
<feature type="binding site" evidence="1">
    <location>
        <position position="103"/>
    </location>
    <ligand>
        <name>S-adenosyl-L-methionine</name>
        <dbReference type="ChEBI" id="CHEBI:59789"/>
    </ligand>
</feature>
<feature type="binding site" evidence="1">
    <location>
        <begin position="126"/>
        <end position="127"/>
    </location>
    <ligand>
        <name>S-adenosyl-L-methionine</name>
        <dbReference type="ChEBI" id="CHEBI:59789"/>
    </ligand>
</feature>
<feature type="binding site" evidence="1">
    <location>
        <begin position="161"/>
        <end position="162"/>
    </location>
    <ligand>
        <name>S-adenosyl-L-methionine</name>
        <dbReference type="ChEBI" id="CHEBI:59789"/>
    </ligand>
</feature>
<feature type="binding site" evidence="1">
    <location>
        <position position="181"/>
    </location>
    <ligand>
        <name>S-adenosyl-L-methionine</name>
        <dbReference type="ChEBI" id="CHEBI:59789"/>
    </ligand>
</feature>
<feature type="binding site" evidence="1">
    <location>
        <begin position="259"/>
        <end position="261"/>
    </location>
    <ligand>
        <name>S-adenosyl-L-methionine</name>
        <dbReference type="ChEBI" id="CHEBI:59789"/>
    </ligand>
</feature>
<sequence length="286" mass="33804">MDLRNPNRDPNSRRVLYRTNKEENRKELKHVKIDESTLAQEGKKLDLPKKRFYRQRAHSNPFSDHQLDYPTSPDDMNWSKLFPHYYDSTTGKMTKDVTIADIGCGFGGLLIDLSPAFPEDLILGMEIRVQVTNYVEDRIIALRTNHAKDYQYQNINVIRGNAMKFLPNFFQRAQLSKMFFCFPDPHFKQRKHKARIITNTLLSEYAYVLKDNGVIYTITDVEDLHNWMVKHLEEHPLFERYDKEWEDNDKCVQIMRNATEEGKKVERKKGDKFVACFRRLPNPAIV</sequence>
<proteinExistence type="inferred from homology"/>
<name>TRMB_VANPO</name>